<sequence length="257" mass="29689">MDRIIEKLDHGWWVVSHEQKLWLPKGELPYGEAANFDLVGQRALQIGEWQGEPVWLVQQQRRHDMGSVRQVIDLDVGLFQLAGRGVQLAEFYRSHKYCGYCGHEMYPSKTEWAMLCSHCRERYYPQIAPCIIVAIRRDDSILLAQHTRHRNGVHTVLAGFVEVGETLEQAVAREVMEESGIKVKNLRYVTSQPWPFPQSLMTAFMAEYDSGDIVIDPKELLEANWYRYDDLPLLPPPGTVARRLIEDTVAMCRAEYE</sequence>
<organism>
    <name type="scientific">Escherichia coli (strain K12)</name>
    <dbReference type="NCBI Taxonomy" id="83333"/>
    <lineage>
        <taxon>Bacteria</taxon>
        <taxon>Pseudomonadati</taxon>
        <taxon>Pseudomonadota</taxon>
        <taxon>Gammaproteobacteria</taxon>
        <taxon>Enterobacterales</taxon>
        <taxon>Enterobacteriaceae</taxon>
        <taxon>Escherichia</taxon>
    </lineage>
</organism>
<keyword id="KW-0002">3D-structure</keyword>
<keyword id="KW-0378">Hydrolase</keyword>
<keyword id="KW-0460">Magnesium</keyword>
<keyword id="KW-0464">Manganese</keyword>
<keyword id="KW-0479">Metal-binding</keyword>
<keyword id="KW-0520">NAD</keyword>
<keyword id="KW-1185">Reference proteome</keyword>
<keyword id="KW-0862">Zinc</keyword>
<feature type="chain" id="PRO_0000056963" description="NAD-capped RNA hydrolase NudC">
    <location>
        <begin position="1"/>
        <end position="257"/>
    </location>
</feature>
<feature type="domain" description="Nudix hydrolase" evidence="2">
    <location>
        <begin position="125"/>
        <end position="248"/>
    </location>
</feature>
<feature type="short sequence motif" description="Nudix box" evidence="2">
    <location>
        <begin position="159"/>
        <end position="180"/>
    </location>
</feature>
<feature type="binding site" evidence="4 15">
    <location>
        <position position="25"/>
    </location>
    <ligand>
        <name>substrate</name>
    </ligand>
</feature>
<feature type="binding site" evidence="4 16">
    <location>
        <position position="69"/>
    </location>
    <ligand>
        <name>substrate</name>
    </ligand>
</feature>
<feature type="binding site" evidence="4 5 7 12 13 14 15 16">
    <location>
        <position position="98"/>
    </location>
    <ligand>
        <name>Zn(2+)</name>
        <dbReference type="ChEBI" id="CHEBI:29105"/>
    </ligand>
</feature>
<feature type="binding site" evidence="4 5 7 12 13 14 15 16">
    <location>
        <position position="101"/>
    </location>
    <ligand>
        <name>Zn(2+)</name>
        <dbReference type="ChEBI" id="CHEBI:29105"/>
    </ligand>
</feature>
<feature type="binding site" evidence="5 14">
    <location>
        <position position="111"/>
    </location>
    <ligand>
        <name>substrate</name>
    </ligand>
</feature>
<feature type="binding site" evidence="4 5 7 12 13 14 15 16">
    <location>
        <position position="116"/>
    </location>
    <ligand>
        <name>Zn(2+)</name>
        <dbReference type="ChEBI" id="CHEBI:29105"/>
    </ligand>
</feature>
<feature type="binding site" evidence="4 5 7 12 13 14 15 16">
    <location>
        <position position="119"/>
    </location>
    <ligand>
        <name>Zn(2+)</name>
        <dbReference type="ChEBI" id="CHEBI:29105"/>
    </ligand>
</feature>
<feature type="binding site" evidence="4 5 14 15">
    <location>
        <position position="124"/>
    </location>
    <ligand>
        <name>substrate</name>
    </ligand>
</feature>
<feature type="binding site" evidence="1">
    <location>
        <position position="158"/>
    </location>
    <ligand>
        <name>a divalent metal cation</name>
        <dbReference type="ChEBI" id="CHEBI:60240"/>
        <label>1</label>
    </ligand>
</feature>
<feature type="binding site" evidence="1">
    <location>
        <position position="174"/>
    </location>
    <ligand>
        <name>a divalent metal cation</name>
        <dbReference type="ChEBI" id="CHEBI:60240"/>
        <label>2</label>
    </ligand>
</feature>
<feature type="binding site" evidence="1">
    <location>
        <position position="174"/>
    </location>
    <ligand>
        <name>a divalent metal cation</name>
        <dbReference type="ChEBI" id="CHEBI:60240"/>
        <label>3</label>
    </ligand>
</feature>
<feature type="binding site" evidence="1">
    <location>
        <position position="178"/>
    </location>
    <ligand>
        <name>a divalent metal cation</name>
        <dbReference type="ChEBI" id="CHEBI:60240"/>
        <label>1</label>
    </ligand>
</feature>
<feature type="binding site" evidence="1">
    <location>
        <position position="178"/>
    </location>
    <ligand>
        <name>a divalent metal cation</name>
        <dbReference type="ChEBI" id="CHEBI:60240"/>
        <label>3</label>
    </ligand>
</feature>
<feature type="binding site" evidence="4 5 14 15">
    <location>
        <begin position="192"/>
        <end position="199"/>
    </location>
    <ligand>
        <name>substrate</name>
    </ligand>
</feature>
<feature type="binding site" evidence="1">
    <location>
        <position position="219"/>
    </location>
    <ligand>
        <name>a divalent metal cation</name>
        <dbReference type="ChEBI" id="CHEBI:60240"/>
        <label>1</label>
    </ligand>
</feature>
<feature type="binding site" evidence="1">
    <location>
        <position position="219"/>
    </location>
    <ligand>
        <name>a divalent metal cation</name>
        <dbReference type="ChEBI" id="CHEBI:60240"/>
        <label>3</label>
    </ligand>
</feature>
<feature type="binding site" evidence="4 5 14 15">
    <location>
        <position position="241"/>
    </location>
    <ligand>
        <name>substrate</name>
    </ligand>
</feature>
<feature type="mutagenesis site" description="Does not affect deNADding activity." evidence="4">
    <original>R</original>
    <variation>A</variation>
    <location>
        <position position="69"/>
    </location>
</feature>
<feature type="mutagenesis site" description="Abolished deNADding activity." evidence="4">
    <original>F</original>
    <variation>A</variation>
    <location>
        <position position="160"/>
    </location>
</feature>
<feature type="mutagenesis site" description="Abolished deNADding activity." evidence="4">
    <original>E</original>
    <variation>Q</variation>
    <location>
        <position position="174"/>
    </location>
</feature>
<feature type="mutagenesis site" description="Abolished deNADding activity." evidence="3 4 5">
    <original>E</original>
    <variation>Q</variation>
    <location>
        <position position="178"/>
    </location>
</feature>
<feature type="mutagenesis site" description="Abolished deNADding activity without disrupting homodimerization." evidence="4">
    <original>Y</original>
    <variation>A</variation>
    <variation>Q</variation>
    <location>
        <position position="188"/>
    </location>
</feature>
<feature type="mutagenesis site" description="Abolished deNADding activity." evidence="4">
    <original>W</original>
    <variation>A</variation>
    <location>
        <position position="194"/>
    </location>
</feature>
<feature type="mutagenesis site" description="Abolished deNADding activity." evidence="4">
    <original>V</original>
    <variation>A</variation>
    <location>
        <position position="214"/>
    </location>
</feature>
<feature type="mutagenesis site" description="Abolished deNADding activity." evidence="4">
    <original>E</original>
    <variation>Q</variation>
    <location>
        <position position="219"/>
    </location>
</feature>
<feature type="mutagenesis site" description="Strongly reduced but not abolished deNADding activity." evidence="4">
    <original>P</original>
    <variation>A</variation>
    <location>
        <position position="236"/>
    </location>
</feature>
<feature type="sequence conflict" description="In Ref. 2; AAC43094." evidence="9" ref="2">
    <original>A</original>
    <variation>R</variation>
    <location>
        <position position="33"/>
    </location>
</feature>
<feature type="strand" evidence="18">
    <location>
        <begin position="2"/>
        <end position="4"/>
    </location>
</feature>
<feature type="strand" evidence="18">
    <location>
        <begin position="10"/>
        <end position="17"/>
    </location>
</feature>
<feature type="strand" evidence="18">
    <location>
        <begin position="20"/>
        <end position="22"/>
    </location>
</feature>
<feature type="helix" evidence="18">
    <location>
        <begin position="24"/>
        <end position="26"/>
    </location>
</feature>
<feature type="strand" evidence="18">
    <location>
        <begin position="30"/>
        <end position="32"/>
    </location>
</feature>
<feature type="helix" evidence="18">
    <location>
        <begin position="33"/>
        <end position="36"/>
    </location>
</feature>
<feature type="strand" evidence="18">
    <location>
        <begin position="42"/>
        <end position="49"/>
    </location>
</feature>
<feature type="strand" evidence="18">
    <location>
        <begin position="52"/>
        <end position="58"/>
    </location>
</feature>
<feature type="helix" evidence="18">
    <location>
        <begin position="68"/>
        <end position="71"/>
    </location>
</feature>
<feature type="turn" evidence="17">
    <location>
        <begin position="72"/>
        <end position="74"/>
    </location>
</feature>
<feature type="helix" evidence="18">
    <location>
        <begin position="76"/>
        <end position="93"/>
    </location>
</feature>
<feature type="turn" evidence="18">
    <location>
        <begin position="99"/>
        <end position="101"/>
    </location>
</feature>
<feature type="strand" evidence="18">
    <location>
        <begin position="104"/>
        <end position="107"/>
    </location>
</feature>
<feature type="strand" evidence="18">
    <location>
        <begin position="109"/>
        <end position="112"/>
    </location>
</feature>
<feature type="strand" evidence="18">
    <location>
        <begin position="114"/>
        <end position="120"/>
    </location>
</feature>
<feature type="strand" evidence="18">
    <location>
        <begin position="128"/>
        <end position="137"/>
    </location>
</feature>
<feature type="strand" evidence="18">
    <location>
        <begin position="140"/>
        <end position="148"/>
    </location>
</feature>
<feature type="strand" evidence="18">
    <location>
        <begin position="157"/>
        <end position="160"/>
    </location>
</feature>
<feature type="helix" evidence="18">
    <location>
        <begin position="167"/>
        <end position="179"/>
    </location>
</feature>
<feature type="strand" evidence="18">
    <location>
        <begin position="182"/>
        <end position="194"/>
    </location>
</feature>
<feature type="turn" evidence="18">
    <location>
        <begin position="195"/>
        <end position="198"/>
    </location>
</feature>
<feature type="strand" evidence="18">
    <location>
        <begin position="199"/>
        <end position="210"/>
    </location>
</feature>
<feature type="turn" evidence="18">
    <location>
        <begin position="217"/>
        <end position="219"/>
    </location>
</feature>
<feature type="strand" evidence="18">
    <location>
        <begin position="220"/>
        <end position="227"/>
    </location>
</feature>
<feature type="helix" evidence="18">
    <location>
        <begin position="240"/>
        <end position="255"/>
    </location>
</feature>
<proteinExistence type="evidence at protein level"/>
<gene>
    <name type="primary">nudC</name>
    <name type="synonym">yjaD</name>
    <name type="ordered locus">b3996</name>
    <name type="ordered locus">JW5548</name>
</gene>
<comment type="function">
    <text evidence="3 4 5 6">mRNA decapping enzyme that specifically removes the nicotinamide adenine dinucleotide (NAD) cap from a subset of mRNAs by hydrolyzing the diphosphate linkage to produce nicotinamide mononucleotide (NMN) and 5' monophosphate mRNA (PubMed:25533955, PubMed:27428510, PubMed:27561816). The NAD-cap is present at the 5'-end of some mRNAs and stabilizes RNA against 5'-processing (PubMed:25533955). Has preference for mRNAs with a 5'-end purine (PubMed:27428510). Catalyzes the hydrolysis of a broad range of dinucleotide pyrophosphates, but uniquely prefers the reduced form of NADH (PubMed:25533955, PubMed:7829480).</text>
</comment>
<comment type="catalytic activity">
    <reaction evidence="3 4 5">
        <text>a 5'-end NAD(+)-phospho-ribonucleoside in mRNA + H2O = a 5'-end phospho-adenosine-phospho-ribonucleoside in mRNA + beta-nicotinamide D-ribonucleotide + 2 H(+)</text>
        <dbReference type="Rhea" id="RHEA:60876"/>
        <dbReference type="Rhea" id="RHEA-COMP:15698"/>
        <dbReference type="Rhea" id="RHEA-COMP:15719"/>
        <dbReference type="ChEBI" id="CHEBI:14649"/>
        <dbReference type="ChEBI" id="CHEBI:15377"/>
        <dbReference type="ChEBI" id="CHEBI:15378"/>
        <dbReference type="ChEBI" id="CHEBI:144029"/>
        <dbReference type="ChEBI" id="CHEBI:144051"/>
    </reaction>
    <physiologicalReaction direction="left-to-right" evidence="3 4 5">
        <dbReference type="Rhea" id="RHEA:60877"/>
    </physiologicalReaction>
</comment>
<comment type="catalytic activity">
    <reaction evidence="3 6">
        <text>NAD(+) + H2O = beta-nicotinamide D-ribonucleotide + AMP + 2 H(+)</text>
        <dbReference type="Rhea" id="RHEA:11800"/>
        <dbReference type="ChEBI" id="CHEBI:14649"/>
        <dbReference type="ChEBI" id="CHEBI:15377"/>
        <dbReference type="ChEBI" id="CHEBI:15378"/>
        <dbReference type="ChEBI" id="CHEBI:57540"/>
        <dbReference type="ChEBI" id="CHEBI:456215"/>
        <dbReference type="EC" id="3.6.1.22"/>
    </reaction>
</comment>
<comment type="catalytic activity">
    <reaction evidence="3 6">
        <text>NADH + H2O = reduced beta-nicotinamide D-ribonucleotide + AMP + 2 H(+)</text>
        <dbReference type="Rhea" id="RHEA:48868"/>
        <dbReference type="ChEBI" id="CHEBI:15377"/>
        <dbReference type="ChEBI" id="CHEBI:15378"/>
        <dbReference type="ChEBI" id="CHEBI:57945"/>
        <dbReference type="ChEBI" id="CHEBI:90832"/>
        <dbReference type="ChEBI" id="CHEBI:456215"/>
        <dbReference type="EC" id="3.6.1.22"/>
    </reaction>
</comment>
<comment type="cofactor">
    <cofactor evidence="5 6">
        <name>Mg(2+)</name>
        <dbReference type="ChEBI" id="CHEBI:18420"/>
    </cofactor>
    <cofactor evidence="6">
        <name>Mn(2+)</name>
        <dbReference type="ChEBI" id="CHEBI:29035"/>
    </cofactor>
    <text evidence="6">Divalent metal cations. Mg(2+) or Mn(2+).</text>
</comment>
<comment type="cofactor">
    <cofactor evidence="4 5 7">
        <name>Zn(2+)</name>
        <dbReference type="ChEBI" id="CHEBI:29105"/>
    </cofactor>
    <text evidence="4 5 7">Binds 1 zinc ion per subunit.</text>
</comment>
<comment type="biophysicochemical properties">
    <kinetics>
        <KM evidence="6">0.11 mM for NADH</KM>
        <KM evidence="6">5.1 mM for NAD(+)</KM>
        <KM evidence="6">0.29 mM for deamino-NADH</KM>
        <KM evidence="6">2.6 mM for deamino-NAD(+)</KM>
        <KM evidence="6">0.67 mM for AppA</KM>
        <KM evidence="6">1.8 mM for ADP-ribose</KM>
        <Vmax evidence="6">7.6 umol/min/mg enzyme with NADH as substrate</Vmax>
        <Vmax evidence="6">2.9 umol/min/mg enzyme with NAD(+) as substrate</Vmax>
        <Vmax evidence="6">8.9 umol/min/mg enzyme with deamino-NADH as substrate</Vmax>
        <Vmax evidence="6">3.2 umol/min/mg enzyme with deamino-NAD(+) as substrate</Vmax>
        <Vmax evidence="6">4.7 umol/min/mg enzyme with AppA as substrate</Vmax>
        <Vmax evidence="6">4.8 umol/min/mg enzyme with ADP-ribose as substrate</Vmax>
    </kinetics>
    <phDependence>
        <text evidence="6">Optimum pH is 8.5.</text>
    </phDependence>
</comment>
<comment type="subunit">
    <text evidence="4 5 10 11">Homodimer.</text>
</comment>
<comment type="similarity">
    <text evidence="9">Belongs to the Nudix hydrolase family. NudC subfamily.</text>
</comment>
<comment type="sequence caution" evidence="9">
    <conflict type="frameshift">
        <sequence resource="EMBL" id="D12624"/>
    </conflict>
</comment>
<protein>
    <recommendedName>
        <fullName evidence="9">NAD-capped RNA hydrolase NudC</fullName>
        <shortName evidence="9">DeNADding enzyme NudC</shortName>
        <ecNumber evidence="3 4 5">3.6.1.-</ecNumber>
    </recommendedName>
    <alternativeName>
        <fullName evidence="8">NADH pyrophosphatase</fullName>
        <ecNumber evidence="6">3.6.1.22</ecNumber>
    </alternativeName>
</protein>
<name>NUDC_ECOLI</name>
<dbReference type="EC" id="3.6.1.-" evidence="3 4 5"/>
<dbReference type="EC" id="3.6.1.22" evidence="6"/>
<dbReference type="EMBL" id="D12624">
    <property type="status" value="NOT_ANNOTATED_CDS"/>
    <property type="molecule type" value="Genomic_DNA"/>
</dbReference>
<dbReference type="EMBL" id="U00006">
    <property type="protein sequence ID" value="AAC43094.1"/>
    <property type="molecule type" value="Genomic_DNA"/>
</dbReference>
<dbReference type="EMBL" id="U00096">
    <property type="protein sequence ID" value="AAT48238.1"/>
    <property type="molecule type" value="Genomic_DNA"/>
</dbReference>
<dbReference type="EMBL" id="AP009048">
    <property type="protein sequence ID" value="BAE77323.1"/>
    <property type="molecule type" value="Genomic_DNA"/>
</dbReference>
<dbReference type="PIR" id="G65206">
    <property type="entry name" value="G65206"/>
</dbReference>
<dbReference type="RefSeq" id="WP_000373940.1">
    <property type="nucleotide sequence ID" value="NZ_STEB01000045.1"/>
</dbReference>
<dbReference type="RefSeq" id="YP_026280.1">
    <property type="nucleotide sequence ID" value="NC_000913.3"/>
</dbReference>
<dbReference type="PDB" id="1VK6">
    <property type="method" value="X-ray"/>
    <property type="resolution" value="2.20 A"/>
    <property type="chains" value="A=1-257"/>
</dbReference>
<dbReference type="PDB" id="2GB5">
    <property type="method" value="X-ray"/>
    <property type="resolution" value="2.30 A"/>
    <property type="chains" value="A/B=1-257"/>
</dbReference>
<dbReference type="PDB" id="5ISY">
    <property type="method" value="X-ray"/>
    <property type="resolution" value="2.35 A"/>
    <property type="chains" value="A/C=1-257"/>
</dbReference>
<dbReference type="PDB" id="5IW4">
    <property type="method" value="X-ray"/>
    <property type="resolution" value="2.60 A"/>
    <property type="chains" value="A/B=1-257"/>
</dbReference>
<dbReference type="PDB" id="5IW5">
    <property type="method" value="X-ray"/>
    <property type="resolution" value="2.70 A"/>
    <property type="chains" value="A/B=1-257"/>
</dbReference>
<dbReference type="PDB" id="7E44">
    <property type="method" value="X-ray"/>
    <property type="resolution" value="2.00 A"/>
    <property type="chains" value="A/B/E/F=1-257"/>
</dbReference>
<dbReference type="PDBsum" id="1VK6"/>
<dbReference type="PDBsum" id="2GB5"/>
<dbReference type="PDBsum" id="5ISY"/>
<dbReference type="PDBsum" id="5IW4"/>
<dbReference type="PDBsum" id="5IW5"/>
<dbReference type="PDBsum" id="7E44"/>
<dbReference type="SMR" id="P32664"/>
<dbReference type="BioGRID" id="4263215">
    <property type="interactions" value="138"/>
</dbReference>
<dbReference type="FunCoup" id="P32664">
    <property type="interactions" value="406"/>
</dbReference>
<dbReference type="IntAct" id="P32664">
    <property type="interactions" value="1"/>
</dbReference>
<dbReference type="STRING" id="511145.b3996"/>
<dbReference type="jPOST" id="P32664"/>
<dbReference type="PaxDb" id="511145-b3996"/>
<dbReference type="EnsemblBacteria" id="AAT48238">
    <property type="protein sequence ID" value="AAT48238"/>
    <property type="gene ID" value="b3996"/>
</dbReference>
<dbReference type="GeneID" id="93777898"/>
<dbReference type="GeneID" id="948498"/>
<dbReference type="KEGG" id="ecj:JW5548"/>
<dbReference type="KEGG" id="eco:b3996"/>
<dbReference type="KEGG" id="ecoc:C3026_21585"/>
<dbReference type="PATRIC" id="fig|1411691.4.peg.2715"/>
<dbReference type="EchoBASE" id="EB1653"/>
<dbReference type="eggNOG" id="COG2816">
    <property type="taxonomic scope" value="Bacteria"/>
</dbReference>
<dbReference type="HOGENOM" id="CLU_037162_0_1_6"/>
<dbReference type="InParanoid" id="P32664"/>
<dbReference type="OMA" id="TWAREHR"/>
<dbReference type="OrthoDB" id="9791656at2"/>
<dbReference type="PhylomeDB" id="P32664"/>
<dbReference type="BioCyc" id="EcoCyc:EG11702-MONOMER"/>
<dbReference type="BioCyc" id="MetaCyc:EG11702-MONOMER"/>
<dbReference type="EvolutionaryTrace" id="P32664"/>
<dbReference type="PRO" id="PR:P32664"/>
<dbReference type="Proteomes" id="UP000000625">
    <property type="component" value="Chromosome"/>
</dbReference>
<dbReference type="GO" id="GO:0000287">
    <property type="term" value="F:magnesium ion binding"/>
    <property type="evidence" value="ECO:0000314"/>
    <property type="project" value="UniProtKB"/>
</dbReference>
<dbReference type="GO" id="GO:0030145">
    <property type="term" value="F:manganese ion binding"/>
    <property type="evidence" value="ECO:0000314"/>
    <property type="project" value="EcoCyc"/>
</dbReference>
<dbReference type="GO" id="GO:0000210">
    <property type="term" value="F:NAD+ diphosphatase activity"/>
    <property type="evidence" value="ECO:0000314"/>
    <property type="project" value="UniProtKB"/>
</dbReference>
<dbReference type="GO" id="GO:0035529">
    <property type="term" value="F:NADH pyrophosphatase activity"/>
    <property type="evidence" value="ECO:0000314"/>
    <property type="project" value="UniProtKB"/>
</dbReference>
<dbReference type="GO" id="GO:0042803">
    <property type="term" value="F:protein homodimerization activity"/>
    <property type="evidence" value="ECO:0000314"/>
    <property type="project" value="EcoCyc"/>
</dbReference>
<dbReference type="GO" id="GO:0110153">
    <property type="term" value="F:RNA NAD-cap (NMN-forming) hydrolase activity"/>
    <property type="evidence" value="ECO:0000314"/>
    <property type="project" value="UniProtKB"/>
</dbReference>
<dbReference type="GO" id="GO:0008270">
    <property type="term" value="F:zinc ion binding"/>
    <property type="evidence" value="ECO:0000314"/>
    <property type="project" value="UniProtKB"/>
</dbReference>
<dbReference type="GO" id="GO:0006402">
    <property type="term" value="P:mRNA catabolic process"/>
    <property type="evidence" value="ECO:0000314"/>
    <property type="project" value="EcoCyc"/>
</dbReference>
<dbReference type="GO" id="GO:0048255">
    <property type="term" value="P:mRNA stabilization"/>
    <property type="evidence" value="ECO:0000314"/>
    <property type="project" value="UniProtKB"/>
</dbReference>
<dbReference type="GO" id="GO:0019677">
    <property type="term" value="P:NAD catabolic process"/>
    <property type="evidence" value="ECO:0000318"/>
    <property type="project" value="GO_Central"/>
</dbReference>
<dbReference type="GO" id="GO:0110155">
    <property type="term" value="P:NAD-cap decapping"/>
    <property type="evidence" value="ECO:0000314"/>
    <property type="project" value="UniProtKB"/>
</dbReference>
<dbReference type="GO" id="GO:0006734">
    <property type="term" value="P:NADH metabolic process"/>
    <property type="evidence" value="ECO:0000318"/>
    <property type="project" value="GO_Central"/>
</dbReference>
<dbReference type="GO" id="GO:0006742">
    <property type="term" value="P:NADP catabolic process"/>
    <property type="evidence" value="ECO:0000318"/>
    <property type="project" value="GO_Central"/>
</dbReference>
<dbReference type="CDD" id="cd03429">
    <property type="entry name" value="NUDIX_NADH_pyrophosphatase_Nudt13"/>
    <property type="match status" value="1"/>
</dbReference>
<dbReference type="FunFam" id="3.90.79.10:FF:000004">
    <property type="entry name" value="NADH pyrophosphatase"/>
    <property type="match status" value="1"/>
</dbReference>
<dbReference type="FunFam" id="3.90.79.20:FF:000001">
    <property type="entry name" value="NADH pyrophosphatase"/>
    <property type="match status" value="1"/>
</dbReference>
<dbReference type="Gene3D" id="3.90.79.20">
    <property type="match status" value="1"/>
</dbReference>
<dbReference type="Gene3D" id="3.90.79.10">
    <property type="entry name" value="Nucleoside Triphosphate Pyrophosphohydrolase"/>
    <property type="match status" value="1"/>
</dbReference>
<dbReference type="HAMAP" id="MF_00297">
    <property type="entry name" value="Nudix_NudC"/>
    <property type="match status" value="1"/>
</dbReference>
<dbReference type="InterPro" id="IPR050241">
    <property type="entry name" value="NAD-cap_RNA_hydrolase_NudC"/>
</dbReference>
<dbReference type="InterPro" id="IPR049734">
    <property type="entry name" value="NudC-like_C"/>
</dbReference>
<dbReference type="InterPro" id="IPR015797">
    <property type="entry name" value="NUDIX_hydrolase-like_dom_sf"/>
</dbReference>
<dbReference type="InterPro" id="IPR020084">
    <property type="entry name" value="NUDIX_hydrolase_CS"/>
</dbReference>
<dbReference type="InterPro" id="IPR000086">
    <property type="entry name" value="NUDIX_hydrolase_dom"/>
</dbReference>
<dbReference type="InterPro" id="IPR022925">
    <property type="entry name" value="RNA_Hydrolase_NudC"/>
</dbReference>
<dbReference type="InterPro" id="IPR015376">
    <property type="entry name" value="Znr_NADH_PPase"/>
</dbReference>
<dbReference type="NCBIfam" id="NF001299">
    <property type="entry name" value="PRK00241.1"/>
    <property type="match status" value="1"/>
</dbReference>
<dbReference type="PANTHER" id="PTHR42904:SF6">
    <property type="entry name" value="NAD-CAPPED RNA HYDROLASE NUDT12"/>
    <property type="match status" value="1"/>
</dbReference>
<dbReference type="PANTHER" id="PTHR42904">
    <property type="entry name" value="NUDIX HYDROLASE, NUDC SUBFAMILY"/>
    <property type="match status" value="1"/>
</dbReference>
<dbReference type="Pfam" id="PF00293">
    <property type="entry name" value="NUDIX"/>
    <property type="match status" value="1"/>
</dbReference>
<dbReference type="Pfam" id="PF09297">
    <property type="entry name" value="Zn_ribbon_NUD"/>
    <property type="match status" value="1"/>
</dbReference>
<dbReference type="SUPFAM" id="SSF55811">
    <property type="entry name" value="Nudix"/>
    <property type="match status" value="2"/>
</dbReference>
<dbReference type="PROSITE" id="PS51462">
    <property type="entry name" value="NUDIX"/>
    <property type="match status" value="1"/>
</dbReference>
<dbReference type="PROSITE" id="PS00893">
    <property type="entry name" value="NUDIX_BOX"/>
    <property type="match status" value="1"/>
</dbReference>
<reference key="1">
    <citation type="submission" date="1992-07" db="EMBL/GenBank/DDBJ databases">
        <authorList>
            <person name="Nishimura K."/>
            <person name="Inokuchi H."/>
        </authorList>
    </citation>
    <scope>NUCLEOTIDE SEQUENCE [GENOMIC DNA]</scope>
    <source>
        <strain>K12</strain>
    </source>
</reference>
<reference key="2">
    <citation type="journal article" date="1993" name="Nucleic Acids Res.">
        <title>Analysis of the Escherichia coli genome. IV. DNA sequence of the region from 89.2 to 92.8 minutes.</title>
        <authorList>
            <person name="Blattner F.R."/>
            <person name="Burland V.D."/>
            <person name="Plunkett G. III"/>
            <person name="Sofia H.J."/>
            <person name="Daniels D.L."/>
        </authorList>
    </citation>
    <scope>NUCLEOTIDE SEQUENCE [LARGE SCALE GENOMIC DNA]</scope>
    <source>
        <strain>K12 / MG1655 / ATCC 47076</strain>
    </source>
</reference>
<reference key="3">
    <citation type="journal article" date="1997" name="Science">
        <title>The complete genome sequence of Escherichia coli K-12.</title>
        <authorList>
            <person name="Blattner F.R."/>
            <person name="Plunkett G. III"/>
            <person name="Bloch C.A."/>
            <person name="Perna N.T."/>
            <person name="Burland V."/>
            <person name="Riley M."/>
            <person name="Collado-Vides J."/>
            <person name="Glasner J.D."/>
            <person name="Rode C.K."/>
            <person name="Mayhew G.F."/>
            <person name="Gregor J."/>
            <person name="Davis N.W."/>
            <person name="Kirkpatrick H.A."/>
            <person name="Goeden M.A."/>
            <person name="Rose D.J."/>
            <person name="Mau B."/>
            <person name="Shao Y."/>
        </authorList>
    </citation>
    <scope>NUCLEOTIDE SEQUENCE [LARGE SCALE GENOMIC DNA]</scope>
    <source>
        <strain>K12 / MG1655 / ATCC 47076</strain>
    </source>
</reference>
<reference key="4">
    <citation type="journal article" date="2006" name="Nucleic Acids Res.">
        <title>Escherichia coli K-12: a cooperatively developed annotation snapshot -- 2005.</title>
        <authorList>
            <person name="Riley M."/>
            <person name="Abe T."/>
            <person name="Arnaud M.B."/>
            <person name="Berlyn M.K.B."/>
            <person name="Blattner F.R."/>
            <person name="Chaudhuri R.R."/>
            <person name="Glasner J.D."/>
            <person name="Horiuchi T."/>
            <person name="Keseler I.M."/>
            <person name="Kosuge T."/>
            <person name="Mori H."/>
            <person name="Perna N.T."/>
            <person name="Plunkett G. III"/>
            <person name="Rudd K.E."/>
            <person name="Serres M.H."/>
            <person name="Thomas G.H."/>
            <person name="Thomson N.R."/>
            <person name="Wishart D."/>
            <person name="Wanner B.L."/>
        </authorList>
    </citation>
    <scope>SEQUENCE REVISION TO 33</scope>
</reference>
<reference key="5">
    <citation type="journal article" date="2006" name="Mol. Syst. Biol.">
        <title>Highly accurate genome sequences of Escherichia coli K-12 strains MG1655 and W3110.</title>
        <authorList>
            <person name="Hayashi K."/>
            <person name="Morooka N."/>
            <person name="Yamamoto Y."/>
            <person name="Fujita K."/>
            <person name="Isono K."/>
            <person name="Choi S."/>
            <person name="Ohtsubo E."/>
            <person name="Baba T."/>
            <person name="Wanner B.L."/>
            <person name="Mori H."/>
            <person name="Horiuchi T."/>
        </authorList>
    </citation>
    <scope>NUCLEOTIDE SEQUENCE [LARGE SCALE GENOMIC DNA]</scope>
    <source>
        <strain>K12 / W3110 / ATCC 27325 / DSM 5911</strain>
    </source>
</reference>
<reference key="6">
    <citation type="journal article" date="1995" name="J. Biol. Chem.">
        <title>Cloning, purification, and properties of a novel NADH pyrophosphatase. Evidence for a nucleotide pyrophosphatase catalytic domain in MutT-like enzymes.</title>
        <authorList>
            <person name="Frick D.N."/>
            <person name="Bessman M.J."/>
        </authorList>
    </citation>
    <scope>FUNCTION</scope>
    <scope>CATALYTIC ACTIVITY</scope>
    <scope>COFACTOR</scope>
    <scope>BIOPHYSICOCHEMICAL PROPERTIES</scope>
    <scope>SUBUNIT</scope>
    <source>
        <strain>K12 / MG1655 / ATCC 47076</strain>
    </source>
</reference>
<reference key="7">
    <citation type="journal article" date="2015" name="Nature">
        <title>NAD captureSeq indicates NAD as a bacterial cap for a subset of regulatory RNAs.</title>
        <authorList>
            <person name="Cahova H."/>
            <person name="Winz M.L."/>
            <person name="Hoefer K."/>
            <person name="Nuebel G."/>
            <person name="Jaeschke A."/>
        </authorList>
    </citation>
    <scope>FUNCTION</scope>
    <scope>CATALYTIC ACTIVITY</scope>
    <scope>MUTAGENESIS OF GLU-178</scope>
</reference>
<reference evidence="12 13" key="8">
    <citation type="submission" date="2009-02" db="PDB data bank">
        <title>Crystal structure of NADH pyrophosphatase (1790429) from Escherichia coli K12 at 2.20 A resolution.</title>
        <authorList>
            <consortium name="Joint center for structural genomics (JCSG)"/>
        </authorList>
    </citation>
    <scope>X-RAY CRYSTALLOGRAPHY (2.2 ANGSTROMS) IN COMPLEX WITH ZINC IONS</scope>
    <scope>COFACTOR</scope>
</reference>
<reference evidence="14" key="9">
    <citation type="journal article" date="2016" name="Cell Res.">
        <title>Structural basis of prokaryotic NAD-RNA decapping by NudC.</title>
        <authorList>
            <person name="Zhang D."/>
            <person name="Liu Y."/>
            <person name="Wang Q."/>
            <person name="Guan Z."/>
            <person name="Wang J."/>
            <person name="Liu J."/>
            <person name="Zou T."/>
            <person name="Yin P."/>
        </authorList>
    </citation>
    <scope>X-RAY CRYSTALLOGRAPHY (2.35 ANGSTROMS) IN COMPLEX WITH NAD AND ZINC</scope>
    <scope>FUNCTION</scope>
    <scope>CATALYTIC ACTIVITY</scope>
    <scope>SUBUNIT</scope>
    <scope>COFACTOR</scope>
    <scope>MUTAGENESIS OF GLU-178</scope>
</reference>
<reference evidence="15 16" key="10">
    <citation type="journal article" date="2016" name="Nat. Chem. Biol.">
        <title>Structure and function of the bacterial decapping enzyme NudC.</title>
        <authorList>
            <person name="Hofer K."/>
            <person name="Li S."/>
            <person name="Abele F."/>
            <person name="Frindert J."/>
            <person name="Schlotthauer J."/>
            <person name="Grawenhoff J."/>
            <person name="Du J."/>
            <person name="Patel D.J."/>
            <person name="Jaschke A."/>
        </authorList>
    </citation>
    <scope>X-RAY CRYSTALLOGRAPHY (2.60 ANGSTROMS) IN COMPLEX WITH NAD; NMN AND ZINC</scope>
    <scope>FUNCTION</scope>
    <scope>CATALYTIC ACTIVITY</scope>
    <scope>SUBUNIT</scope>
    <scope>COFACTOR</scope>
    <scope>MUTAGENESIS OF ARG-69; PHE-160; GLU-174; GLU-178; TYR-188; TRP-194; VAL-214; GLU-219 AND PRO-236</scope>
</reference>
<accession>P32664</accession>
<accession>Q2M8T3</accession>
<accession>Q6BEX6</accession>
<evidence type="ECO:0000250" key="1">
    <source>
        <dbReference type="UniProtKB" id="Q9DCN1"/>
    </source>
</evidence>
<evidence type="ECO:0000255" key="2">
    <source>
        <dbReference type="PROSITE-ProRule" id="PRU00794"/>
    </source>
</evidence>
<evidence type="ECO:0000269" key="3">
    <source>
    </source>
</evidence>
<evidence type="ECO:0000269" key="4">
    <source>
    </source>
</evidence>
<evidence type="ECO:0000269" key="5">
    <source>
    </source>
</evidence>
<evidence type="ECO:0000269" key="6">
    <source>
    </source>
</evidence>
<evidence type="ECO:0000269" key="7">
    <source ref="8"/>
</evidence>
<evidence type="ECO:0000303" key="8">
    <source>
    </source>
</evidence>
<evidence type="ECO:0000305" key="9"/>
<evidence type="ECO:0000305" key="10">
    <source>
    </source>
</evidence>
<evidence type="ECO:0000305" key="11">
    <source ref="8"/>
</evidence>
<evidence type="ECO:0007744" key="12">
    <source>
        <dbReference type="PDB" id="1VK6"/>
    </source>
</evidence>
<evidence type="ECO:0007744" key="13">
    <source>
        <dbReference type="PDB" id="2GB5"/>
    </source>
</evidence>
<evidence type="ECO:0007744" key="14">
    <source>
        <dbReference type="PDB" id="5ISY"/>
    </source>
</evidence>
<evidence type="ECO:0007744" key="15">
    <source>
        <dbReference type="PDB" id="5IW4"/>
    </source>
</evidence>
<evidence type="ECO:0007744" key="16">
    <source>
        <dbReference type="PDB" id="5IW5"/>
    </source>
</evidence>
<evidence type="ECO:0007829" key="17">
    <source>
        <dbReference type="PDB" id="5IW5"/>
    </source>
</evidence>
<evidence type="ECO:0007829" key="18">
    <source>
        <dbReference type="PDB" id="7E44"/>
    </source>
</evidence>